<sequence length="549" mass="59727">MNTFPLFFKLEDRKVLIVGGGDVALRKADLLSRAGACITVLAPSINHEIQALLSSSKHELIYEHYNKTYMTNSRVIIAATDDERLNHQIHADATALNIPVNVVDTPHLCDFIFPAIVDRNPIVIGISSNGKAPVLARLLRARLETLIPQGYGKLAKLAGEFRGDVKAKIPTLTGRRQFWERAFEGKVSQLMFAGNENEALAQLQADLDNTAASITAKDATDDNGLSTASTSAPAIANEFTAARNTMGEVYIVGAGPGDPELLTFKALRLMQQADIVYYDALVSPQVLDLCRRDADKVFVGKKRRNHAVAQLGINELLVNSAKEGRRVVRLKGGDPFIFGRGGEEIESLRAHNIPYQVVPGITAANAAASYAGIPLTHRDHSQSVRFVTGFLKAGAPNNNFKNFLDTDETVVFYMGLHSLPRLTEGLIDAGRSAETPIAIVSNASMPNQQVLTGTLASIVELQEKNQLPTPALLIMGDVVSLHHDLAWYNLHNQQHNQNTSETDNNWLRGGTATTPKSNAQFNAHQQAHALSMITNLATEDGDLEQLIIG</sequence>
<evidence type="ECO:0000255" key="1">
    <source>
        <dbReference type="HAMAP-Rule" id="MF_01646"/>
    </source>
</evidence>
<evidence type="ECO:0000305" key="2"/>
<proteinExistence type="inferred from homology"/>
<reference key="1">
    <citation type="journal article" date="2010" name="Appl. Environ. Microbiol.">
        <title>The genome sequence of Psychrobacter arcticus 273-4, a psychroactive Siberian permafrost bacterium, reveals mechanisms for adaptation to low-temperature growth.</title>
        <authorList>
            <person name="Ayala-del-Rio H.L."/>
            <person name="Chain P.S."/>
            <person name="Grzymski J.J."/>
            <person name="Ponder M.A."/>
            <person name="Ivanova N."/>
            <person name="Bergholz P.W."/>
            <person name="Di Bartolo G."/>
            <person name="Hauser L."/>
            <person name="Land M."/>
            <person name="Bakermans C."/>
            <person name="Rodrigues D."/>
            <person name="Klappenbach J."/>
            <person name="Zarka D."/>
            <person name="Larimer F."/>
            <person name="Richardson P."/>
            <person name="Murray A."/>
            <person name="Thomashow M."/>
            <person name="Tiedje J.M."/>
        </authorList>
    </citation>
    <scope>NUCLEOTIDE SEQUENCE [LARGE SCALE GENOMIC DNA]</scope>
    <source>
        <strain>DSM 17307 / VKM B-2377 / 273-4</strain>
    </source>
</reference>
<protein>
    <recommendedName>
        <fullName evidence="1">Siroheme synthase</fullName>
    </recommendedName>
    <domain>
        <recommendedName>
            <fullName evidence="1">Uroporphyrinogen-III C-methyltransferase</fullName>
            <shortName evidence="1">Urogen III methylase</shortName>
            <ecNumber evidence="1">2.1.1.107</ecNumber>
        </recommendedName>
        <alternativeName>
            <fullName evidence="1">SUMT</fullName>
        </alternativeName>
        <alternativeName>
            <fullName evidence="1">Uroporphyrinogen III methylase</fullName>
            <shortName evidence="1">UROM</shortName>
        </alternativeName>
    </domain>
    <domain>
        <recommendedName>
            <fullName evidence="1">Precorrin-2 dehydrogenase</fullName>
            <ecNumber evidence="1">1.3.1.76</ecNumber>
        </recommendedName>
    </domain>
    <domain>
        <recommendedName>
            <fullName evidence="1">Sirohydrochlorin ferrochelatase</fullName>
            <ecNumber evidence="1">4.99.1.4</ecNumber>
        </recommendedName>
    </domain>
</protein>
<organism>
    <name type="scientific">Psychrobacter arcticus (strain DSM 17307 / VKM B-2377 / 273-4)</name>
    <dbReference type="NCBI Taxonomy" id="259536"/>
    <lineage>
        <taxon>Bacteria</taxon>
        <taxon>Pseudomonadati</taxon>
        <taxon>Pseudomonadota</taxon>
        <taxon>Gammaproteobacteria</taxon>
        <taxon>Moraxellales</taxon>
        <taxon>Moraxellaceae</taxon>
        <taxon>Psychrobacter</taxon>
    </lineage>
</organism>
<gene>
    <name evidence="1" type="primary">cysG</name>
    <name type="ordered locus">Psyc_1065</name>
</gene>
<dbReference type="EC" id="2.1.1.107" evidence="1"/>
<dbReference type="EC" id="1.3.1.76" evidence="1"/>
<dbReference type="EC" id="4.99.1.4" evidence="1"/>
<dbReference type="EMBL" id="CP000082">
    <property type="protein sequence ID" value="AAZ18917.1"/>
    <property type="status" value="ALT_INIT"/>
    <property type="molecule type" value="Genomic_DNA"/>
</dbReference>
<dbReference type="RefSeq" id="WP_041757642.1">
    <property type="nucleotide sequence ID" value="NC_007204.1"/>
</dbReference>
<dbReference type="SMR" id="Q4FSU1"/>
<dbReference type="STRING" id="259536.Psyc_1065"/>
<dbReference type="KEGG" id="par:Psyc_1065"/>
<dbReference type="eggNOG" id="COG0007">
    <property type="taxonomic scope" value="Bacteria"/>
</dbReference>
<dbReference type="eggNOG" id="COG1648">
    <property type="taxonomic scope" value="Bacteria"/>
</dbReference>
<dbReference type="HOGENOM" id="CLU_011276_2_1_6"/>
<dbReference type="OrthoDB" id="9815856at2"/>
<dbReference type="UniPathway" id="UPA00148">
    <property type="reaction ID" value="UER00211"/>
</dbReference>
<dbReference type="UniPathway" id="UPA00148">
    <property type="reaction ID" value="UER00222"/>
</dbReference>
<dbReference type="UniPathway" id="UPA00262">
    <property type="reaction ID" value="UER00211"/>
</dbReference>
<dbReference type="UniPathway" id="UPA00262">
    <property type="reaction ID" value="UER00222"/>
</dbReference>
<dbReference type="UniPathway" id="UPA00262">
    <property type="reaction ID" value="UER00376"/>
</dbReference>
<dbReference type="Proteomes" id="UP000000546">
    <property type="component" value="Chromosome"/>
</dbReference>
<dbReference type="GO" id="GO:0051287">
    <property type="term" value="F:NAD binding"/>
    <property type="evidence" value="ECO:0007669"/>
    <property type="project" value="InterPro"/>
</dbReference>
<dbReference type="GO" id="GO:0043115">
    <property type="term" value="F:precorrin-2 dehydrogenase activity"/>
    <property type="evidence" value="ECO:0007669"/>
    <property type="project" value="UniProtKB-UniRule"/>
</dbReference>
<dbReference type="GO" id="GO:0051266">
    <property type="term" value="F:sirohydrochlorin ferrochelatase activity"/>
    <property type="evidence" value="ECO:0007669"/>
    <property type="project" value="UniProtKB-EC"/>
</dbReference>
<dbReference type="GO" id="GO:0004851">
    <property type="term" value="F:uroporphyrin-III C-methyltransferase activity"/>
    <property type="evidence" value="ECO:0007669"/>
    <property type="project" value="UniProtKB-UniRule"/>
</dbReference>
<dbReference type="GO" id="GO:0009236">
    <property type="term" value="P:cobalamin biosynthetic process"/>
    <property type="evidence" value="ECO:0007669"/>
    <property type="project" value="UniProtKB-UniRule"/>
</dbReference>
<dbReference type="GO" id="GO:0032259">
    <property type="term" value="P:methylation"/>
    <property type="evidence" value="ECO:0007669"/>
    <property type="project" value="UniProtKB-KW"/>
</dbReference>
<dbReference type="GO" id="GO:0019354">
    <property type="term" value="P:siroheme biosynthetic process"/>
    <property type="evidence" value="ECO:0007669"/>
    <property type="project" value="UniProtKB-UniRule"/>
</dbReference>
<dbReference type="CDD" id="cd11642">
    <property type="entry name" value="SUMT"/>
    <property type="match status" value="1"/>
</dbReference>
<dbReference type="FunFam" id="3.30.160.110:FF:000001">
    <property type="entry name" value="Siroheme synthase"/>
    <property type="match status" value="1"/>
</dbReference>
<dbReference type="FunFam" id="3.30.950.10:FF:000001">
    <property type="entry name" value="Siroheme synthase"/>
    <property type="match status" value="1"/>
</dbReference>
<dbReference type="FunFam" id="3.40.1010.10:FF:000001">
    <property type="entry name" value="Siroheme synthase"/>
    <property type="match status" value="1"/>
</dbReference>
<dbReference type="Gene3D" id="3.40.1010.10">
    <property type="entry name" value="Cobalt-precorrin-4 Transmethylase, Domain 1"/>
    <property type="match status" value="1"/>
</dbReference>
<dbReference type="Gene3D" id="3.30.950.10">
    <property type="entry name" value="Methyltransferase, Cobalt-precorrin-4 Transmethylase, Domain 2"/>
    <property type="match status" value="1"/>
</dbReference>
<dbReference type="Gene3D" id="3.40.50.720">
    <property type="entry name" value="NAD(P)-binding Rossmann-like Domain"/>
    <property type="match status" value="1"/>
</dbReference>
<dbReference type="Gene3D" id="1.10.8.210">
    <property type="entry name" value="Sirohaem synthase, dimerisation domain"/>
    <property type="match status" value="1"/>
</dbReference>
<dbReference type="Gene3D" id="3.30.160.110">
    <property type="entry name" value="Siroheme synthase, domain 2"/>
    <property type="match status" value="1"/>
</dbReference>
<dbReference type="HAMAP" id="MF_01646">
    <property type="entry name" value="Siroheme_synth"/>
    <property type="match status" value="1"/>
</dbReference>
<dbReference type="InterPro" id="IPR000878">
    <property type="entry name" value="4pyrrol_Mease"/>
</dbReference>
<dbReference type="InterPro" id="IPR035996">
    <property type="entry name" value="4pyrrol_Methylase_sf"/>
</dbReference>
<dbReference type="InterPro" id="IPR014777">
    <property type="entry name" value="4pyrrole_Mease_sub1"/>
</dbReference>
<dbReference type="InterPro" id="IPR014776">
    <property type="entry name" value="4pyrrole_Mease_sub2"/>
</dbReference>
<dbReference type="InterPro" id="IPR006366">
    <property type="entry name" value="CobA/CysG_C"/>
</dbReference>
<dbReference type="InterPro" id="IPR036291">
    <property type="entry name" value="NAD(P)-bd_dom_sf"/>
</dbReference>
<dbReference type="InterPro" id="IPR050161">
    <property type="entry name" value="Siro_Cobalamin_biosynth"/>
</dbReference>
<dbReference type="InterPro" id="IPR037115">
    <property type="entry name" value="Sirohaem_synt_dimer_dom_sf"/>
</dbReference>
<dbReference type="InterPro" id="IPR012409">
    <property type="entry name" value="Sirohaem_synth"/>
</dbReference>
<dbReference type="InterPro" id="IPR028281">
    <property type="entry name" value="Sirohaem_synthase_central"/>
</dbReference>
<dbReference type="InterPro" id="IPR019478">
    <property type="entry name" value="Sirohaem_synthase_dimer_dom"/>
</dbReference>
<dbReference type="InterPro" id="IPR006367">
    <property type="entry name" value="Sirohaem_synthase_N"/>
</dbReference>
<dbReference type="InterPro" id="IPR003043">
    <property type="entry name" value="Uropor_MeTrfase_CS"/>
</dbReference>
<dbReference type="NCBIfam" id="TIGR01469">
    <property type="entry name" value="cobA_cysG_Cterm"/>
    <property type="match status" value="1"/>
</dbReference>
<dbReference type="NCBIfam" id="TIGR01470">
    <property type="entry name" value="cysG_Nterm"/>
    <property type="match status" value="1"/>
</dbReference>
<dbReference type="NCBIfam" id="NF004790">
    <property type="entry name" value="PRK06136.1"/>
    <property type="match status" value="1"/>
</dbReference>
<dbReference type="NCBIfam" id="NF007922">
    <property type="entry name" value="PRK10637.1"/>
    <property type="match status" value="1"/>
</dbReference>
<dbReference type="PANTHER" id="PTHR45790:SF1">
    <property type="entry name" value="SIROHEME SYNTHASE"/>
    <property type="match status" value="1"/>
</dbReference>
<dbReference type="PANTHER" id="PTHR45790">
    <property type="entry name" value="SIROHEME SYNTHASE-RELATED"/>
    <property type="match status" value="1"/>
</dbReference>
<dbReference type="Pfam" id="PF10414">
    <property type="entry name" value="CysG_dimeriser"/>
    <property type="match status" value="1"/>
</dbReference>
<dbReference type="Pfam" id="PF13241">
    <property type="entry name" value="NAD_binding_7"/>
    <property type="match status" value="1"/>
</dbReference>
<dbReference type="Pfam" id="PF14824">
    <property type="entry name" value="Sirohm_synth_M"/>
    <property type="match status" value="1"/>
</dbReference>
<dbReference type="Pfam" id="PF00590">
    <property type="entry name" value="TP_methylase"/>
    <property type="match status" value="1"/>
</dbReference>
<dbReference type="SUPFAM" id="SSF51735">
    <property type="entry name" value="NAD(P)-binding Rossmann-fold domains"/>
    <property type="match status" value="1"/>
</dbReference>
<dbReference type="SUPFAM" id="SSF75615">
    <property type="entry name" value="Siroheme synthase middle domains-like"/>
    <property type="match status" value="1"/>
</dbReference>
<dbReference type="SUPFAM" id="SSF53790">
    <property type="entry name" value="Tetrapyrrole methylase"/>
    <property type="match status" value="1"/>
</dbReference>
<dbReference type="PROSITE" id="PS00840">
    <property type="entry name" value="SUMT_2"/>
    <property type="match status" value="1"/>
</dbReference>
<feature type="chain" id="PRO_0000330546" description="Siroheme synthase">
    <location>
        <begin position="1"/>
        <end position="549"/>
    </location>
</feature>
<feature type="region of interest" description="Precorrin-2 dehydrogenase /sirohydrochlorin ferrochelatase" evidence="1">
    <location>
        <begin position="1"/>
        <end position="203"/>
    </location>
</feature>
<feature type="region of interest" description="Uroporphyrinogen-III C-methyltransferase" evidence="1">
    <location>
        <begin position="247"/>
        <end position="549"/>
    </location>
</feature>
<feature type="active site" description="Proton acceptor" evidence="1">
    <location>
        <position position="279"/>
    </location>
</feature>
<feature type="active site" description="Proton donor" evidence="1">
    <location>
        <position position="301"/>
    </location>
</feature>
<feature type="binding site" evidence="1">
    <location>
        <begin position="22"/>
        <end position="23"/>
    </location>
    <ligand>
        <name>NAD(+)</name>
        <dbReference type="ChEBI" id="CHEBI:57540"/>
    </ligand>
</feature>
<feature type="binding site" evidence="1">
    <location>
        <begin position="43"/>
        <end position="44"/>
    </location>
    <ligand>
        <name>NAD(+)</name>
        <dbReference type="ChEBI" id="CHEBI:57540"/>
    </ligand>
</feature>
<feature type="binding site" evidence="1">
    <location>
        <position position="256"/>
    </location>
    <ligand>
        <name>S-adenosyl-L-methionine</name>
        <dbReference type="ChEBI" id="CHEBI:59789"/>
    </ligand>
</feature>
<feature type="binding site" evidence="1">
    <location>
        <begin position="332"/>
        <end position="334"/>
    </location>
    <ligand>
        <name>S-adenosyl-L-methionine</name>
        <dbReference type="ChEBI" id="CHEBI:59789"/>
    </ligand>
</feature>
<feature type="binding site" evidence="1">
    <location>
        <position position="337"/>
    </location>
    <ligand>
        <name>S-adenosyl-L-methionine</name>
        <dbReference type="ChEBI" id="CHEBI:59789"/>
    </ligand>
</feature>
<feature type="binding site" evidence="1">
    <location>
        <begin position="362"/>
        <end position="363"/>
    </location>
    <ligand>
        <name>S-adenosyl-L-methionine</name>
        <dbReference type="ChEBI" id="CHEBI:59789"/>
    </ligand>
</feature>
<feature type="binding site" evidence="1">
    <location>
        <position position="414"/>
    </location>
    <ligand>
        <name>S-adenosyl-L-methionine</name>
        <dbReference type="ChEBI" id="CHEBI:59789"/>
    </ligand>
</feature>
<feature type="binding site" evidence="1">
    <location>
        <position position="443"/>
    </location>
    <ligand>
        <name>S-adenosyl-L-methionine</name>
        <dbReference type="ChEBI" id="CHEBI:59789"/>
    </ligand>
</feature>
<feature type="modified residue" description="Phosphoserine" evidence="1">
    <location>
        <position position="128"/>
    </location>
</feature>
<keyword id="KW-0169">Cobalamin biosynthesis</keyword>
<keyword id="KW-0456">Lyase</keyword>
<keyword id="KW-0489">Methyltransferase</keyword>
<keyword id="KW-0511">Multifunctional enzyme</keyword>
<keyword id="KW-0520">NAD</keyword>
<keyword id="KW-0560">Oxidoreductase</keyword>
<keyword id="KW-0597">Phosphoprotein</keyword>
<keyword id="KW-0627">Porphyrin biosynthesis</keyword>
<keyword id="KW-1185">Reference proteome</keyword>
<keyword id="KW-0949">S-adenosyl-L-methionine</keyword>
<keyword id="KW-0808">Transferase</keyword>
<accession>Q4FSU1</accession>
<name>CYSG_PSYA2</name>
<comment type="function">
    <text evidence="1">Multifunctional enzyme that catalyzes the SAM-dependent methylations of uroporphyrinogen III at position C-2 and C-7 to form precorrin-2 via precorrin-1. Then it catalyzes the NAD-dependent ring dehydrogenation of precorrin-2 to yield sirohydrochlorin. Finally, it catalyzes the ferrochelation of sirohydrochlorin to yield siroheme.</text>
</comment>
<comment type="catalytic activity">
    <reaction evidence="1">
        <text>uroporphyrinogen III + 2 S-adenosyl-L-methionine = precorrin-2 + 2 S-adenosyl-L-homocysteine + H(+)</text>
        <dbReference type="Rhea" id="RHEA:32459"/>
        <dbReference type="ChEBI" id="CHEBI:15378"/>
        <dbReference type="ChEBI" id="CHEBI:57308"/>
        <dbReference type="ChEBI" id="CHEBI:57856"/>
        <dbReference type="ChEBI" id="CHEBI:58827"/>
        <dbReference type="ChEBI" id="CHEBI:59789"/>
        <dbReference type="EC" id="2.1.1.107"/>
    </reaction>
</comment>
<comment type="catalytic activity">
    <reaction evidence="1">
        <text>precorrin-2 + NAD(+) = sirohydrochlorin + NADH + 2 H(+)</text>
        <dbReference type="Rhea" id="RHEA:15613"/>
        <dbReference type="ChEBI" id="CHEBI:15378"/>
        <dbReference type="ChEBI" id="CHEBI:57540"/>
        <dbReference type="ChEBI" id="CHEBI:57945"/>
        <dbReference type="ChEBI" id="CHEBI:58351"/>
        <dbReference type="ChEBI" id="CHEBI:58827"/>
        <dbReference type="EC" id="1.3.1.76"/>
    </reaction>
</comment>
<comment type="catalytic activity">
    <reaction evidence="1">
        <text>siroheme + 2 H(+) = sirohydrochlorin + Fe(2+)</text>
        <dbReference type="Rhea" id="RHEA:24360"/>
        <dbReference type="ChEBI" id="CHEBI:15378"/>
        <dbReference type="ChEBI" id="CHEBI:29033"/>
        <dbReference type="ChEBI" id="CHEBI:58351"/>
        <dbReference type="ChEBI" id="CHEBI:60052"/>
        <dbReference type="EC" id="4.99.1.4"/>
    </reaction>
</comment>
<comment type="pathway">
    <text evidence="1">Cofactor biosynthesis; adenosylcobalamin biosynthesis; precorrin-2 from uroporphyrinogen III: step 1/1.</text>
</comment>
<comment type="pathway">
    <text evidence="1">Cofactor biosynthesis; adenosylcobalamin biosynthesis; sirohydrochlorin from precorrin-2: step 1/1.</text>
</comment>
<comment type="pathway">
    <text evidence="1">Porphyrin-containing compound metabolism; siroheme biosynthesis; precorrin-2 from uroporphyrinogen III: step 1/1.</text>
</comment>
<comment type="pathway">
    <text evidence="1">Porphyrin-containing compound metabolism; siroheme biosynthesis; siroheme from sirohydrochlorin: step 1/1.</text>
</comment>
<comment type="pathway">
    <text evidence="1">Porphyrin-containing compound metabolism; siroheme biosynthesis; sirohydrochlorin from precorrin-2: step 1/1.</text>
</comment>
<comment type="similarity">
    <text evidence="1">In the N-terminal section; belongs to the precorrin-2 dehydrogenase / sirohydrochlorin ferrochelatase family.</text>
</comment>
<comment type="similarity">
    <text evidence="1">In the C-terminal section; belongs to the precorrin methyltransferase family.</text>
</comment>
<comment type="sequence caution" evidence="2">
    <conflict type="erroneous initiation">
        <sequence resource="EMBL-CDS" id="AAZ18917"/>
    </conflict>
    <text>Extended N-terminus.</text>
</comment>